<sequence length="375" mass="41623">MDDEVAALVIDNGSGMCKAGFAGDDAPRAVFPSIVGRPRHQGVMVGMGQKDSYVGDEAQSKRGILTLKYPIEHGIVTNWDDMEKIWHHTFYNELRVAPEEHPVLLTEAPLNPKANREKMTQIMFETFNAPAFYVAIQAVLSLYASGRTTGIVLDSGDGVSHTVPIYEGFALPHAILRLDLAGRDLTGYLVKCLMERGYPFTTTAEREIVRDIKEKLCYVALDFEQEMQTAAQSSQLEKSYELPDGQVITIGNERFRCPEALFQPSFLGLEAAGIHETTYNSIMKCDLDIRKDLYGNVVLSGGTTMYSGIADRMQKEITSLAPSSMKVKIVAPPERKYSVWIGGSILASLSTFQSMWISKQEYDEAGPSIVHRKCF</sequence>
<evidence type="ECO:0000250" key="1">
    <source>
        <dbReference type="UniProtKB" id="P60010"/>
    </source>
</evidence>
<evidence type="ECO:0000305" key="2"/>
<accession>P53689</accession>
<comment type="function">
    <text>Actins are highly conserved proteins that are involved in various types of cell motility and are ubiquitously expressed in all eukaryotic cells.</text>
</comment>
<comment type="catalytic activity">
    <reaction evidence="1">
        <text>ATP + H2O = ADP + phosphate + H(+)</text>
        <dbReference type="Rhea" id="RHEA:13065"/>
        <dbReference type="ChEBI" id="CHEBI:15377"/>
        <dbReference type="ChEBI" id="CHEBI:15378"/>
        <dbReference type="ChEBI" id="CHEBI:30616"/>
        <dbReference type="ChEBI" id="CHEBI:43474"/>
        <dbReference type="ChEBI" id="CHEBI:456216"/>
    </reaction>
</comment>
<comment type="subcellular location">
    <subcellularLocation>
        <location>Cytoplasm</location>
        <location>Cytoskeleton</location>
    </subcellularLocation>
</comment>
<comment type="similarity">
    <text evidence="2">Belongs to the actin family.</text>
</comment>
<dbReference type="EC" id="3.6.4.-" evidence="1"/>
<dbReference type="EMBL" id="X89898">
    <property type="protein sequence ID" value="CAA61986.1"/>
    <property type="molecule type" value="Genomic_DNA"/>
</dbReference>
<dbReference type="PIR" id="S70377">
    <property type="entry name" value="S70377"/>
</dbReference>
<dbReference type="SMR" id="P53689"/>
<dbReference type="GO" id="GO:0005737">
    <property type="term" value="C:cytoplasm"/>
    <property type="evidence" value="ECO:0007669"/>
    <property type="project" value="UniProtKB-KW"/>
</dbReference>
<dbReference type="GO" id="GO:0005856">
    <property type="term" value="C:cytoskeleton"/>
    <property type="evidence" value="ECO:0007669"/>
    <property type="project" value="UniProtKB-SubCell"/>
</dbReference>
<dbReference type="GO" id="GO:0005524">
    <property type="term" value="F:ATP binding"/>
    <property type="evidence" value="ECO:0007669"/>
    <property type="project" value="UniProtKB-KW"/>
</dbReference>
<dbReference type="GO" id="GO:0016787">
    <property type="term" value="F:hydrolase activity"/>
    <property type="evidence" value="ECO:0007669"/>
    <property type="project" value="UniProtKB-KW"/>
</dbReference>
<dbReference type="CDD" id="cd10224">
    <property type="entry name" value="ASKHA_NBD_actin"/>
    <property type="match status" value="1"/>
</dbReference>
<dbReference type="FunFam" id="3.30.420.40:FF:000131">
    <property type="entry name" value="Actin, alpha skeletal muscle"/>
    <property type="match status" value="1"/>
</dbReference>
<dbReference type="FunFam" id="3.30.420.40:FF:000291">
    <property type="entry name" value="Actin, alpha skeletal muscle"/>
    <property type="match status" value="1"/>
</dbReference>
<dbReference type="FunFam" id="3.90.640.10:FF:000001">
    <property type="entry name" value="Actin, muscle"/>
    <property type="match status" value="1"/>
</dbReference>
<dbReference type="FunFam" id="3.30.420.40:FF:000058">
    <property type="entry name" value="Putative actin-related protein 5"/>
    <property type="match status" value="1"/>
</dbReference>
<dbReference type="Gene3D" id="3.30.420.40">
    <property type="match status" value="2"/>
</dbReference>
<dbReference type="Gene3D" id="3.90.640.10">
    <property type="entry name" value="Actin, Chain A, domain 4"/>
    <property type="match status" value="1"/>
</dbReference>
<dbReference type="InterPro" id="IPR004000">
    <property type="entry name" value="Actin"/>
</dbReference>
<dbReference type="InterPro" id="IPR020902">
    <property type="entry name" value="Actin/actin-like_CS"/>
</dbReference>
<dbReference type="InterPro" id="IPR004001">
    <property type="entry name" value="Actin_CS"/>
</dbReference>
<dbReference type="InterPro" id="IPR043129">
    <property type="entry name" value="ATPase_NBD"/>
</dbReference>
<dbReference type="PANTHER" id="PTHR11937">
    <property type="entry name" value="ACTIN"/>
    <property type="match status" value="1"/>
</dbReference>
<dbReference type="Pfam" id="PF00022">
    <property type="entry name" value="Actin"/>
    <property type="match status" value="1"/>
</dbReference>
<dbReference type="PRINTS" id="PR00190">
    <property type="entry name" value="ACTIN"/>
</dbReference>
<dbReference type="SMART" id="SM00268">
    <property type="entry name" value="ACTIN"/>
    <property type="match status" value="1"/>
</dbReference>
<dbReference type="SUPFAM" id="SSF53067">
    <property type="entry name" value="Actin-like ATPase domain"/>
    <property type="match status" value="2"/>
</dbReference>
<dbReference type="PROSITE" id="PS00406">
    <property type="entry name" value="ACTINS_1"/>
    <property type="match status" value="1"/>
</dbReference>
<dbReference type="PROSITE" id="PS00432">
    <property type="entry name" value="ACTINS_2"/>
    <property type="match status" value="1"/>
</dbReference>
<dbReference type="PROSITE" id="PS01132">
    <property type="entry name" value="ACTINS_ACT_LIKE"/>
    <property type="match status" value="1"/>
</dbReference>
<proteinExistence type="inferred from homology"/>
<reference key="1">
    <citation type="journal article" date="1996" name="Yeast">
        <title>Structural and phylogenetic analysis of the actin gene from the yeast Phaffia rhodozyma.</title>
        <authorList>
            <person name="Wery J."/>
            <person name="Dalderup M.J.M."/>
            <person name="Ter Linde J."/>
            <person name="van Ooyen A.J.J."/>
        </authorList>
    </citation>
    <scope>NUCLEOTIDE SEQUENCE [GENOMIC DNA]</scope>
    <source>
        <strain>ATCC 96594 / BCRC 22365 / CBS 6938 / JCM 9684 / VKM Y-2793</strain>
    </source>
</reference>
<feature type="chain" id="PRO_0000088986" description="Actin">
    <location>
        <begin position="1"/>
        <end position="375"/>
    </location>
</feature>
<keyword id="KW-0067">ATP-binding</keyword>
<keyword id="KW-0963">Cytoplasm</keyword>
<keyword id="KW-0206">Cytoskeleton</keyword>
<keyword id="KW-0378">Hydrolase</keyword>
<keyword id="KW-0547">Nucleotide-binding</keyword>
<name>ACT_PHARH</name>
<protein>
    <recommendedName>
        <fullName>Actin</fullName>
        <ecNumber evidence="1">3.6.4.-</ecNumber>
    </recommendedName>
</protein>
<organism>
    <name type="scientific">Phaffia rhodozyma</name>
    <name type="common">Yeast</name>
    <name type="synonym">Xanthophyllomyces dendrorhous</name>
    <dbReference type="NCBI Taxonomy" id="264483"/>
    <lineage>
        <taxon>Eukaryota</taxon>
        <taxon>Fungi</taxon>
        <taxon>Dikarya</taxon>
        <taxon>Basidiomycota</taxon>
        <taxon>Agaricomycotina</taxon>
        <taxon>Tremellomycetes</taxon>
        <taxon>Cystofilobasidiales</taxon>
        <taxon>Mrakiaceae</taxon>
        <taxon>Phaffia</taxon>
    </lineage>
</organism>